<proteinExistence type="inferred from homology"/>
<reference key="1">
    <citation type="journal article" date="1995" name="DNA Res.">
        <title>Sequence analysis of the genome of the unicellular cyanobacterium Synechocystis sp. strain PCC6803. I. Sequence features in the 1 Mb region from map positions 64% to 92% of the genome.</title>
        <authorList>
            <person name="Kaneko T."/>
            <person name="Tanaka A."/>
            <person name="Sato S."/>
            <person name="Kotani H."/>
            <person name="Sazuka T."/>
            <person name="Miyajima N."/>
            <person name="Sugiura M."/>
            <person name="Tabata S."/>
        </authorList>
    </citation>
    <scope>NUCLEOTIDE SEQUENCE [LARGE SCALE GENOMIC DNA]</scope>
    <source>
        <strain>ATCC 27184 / PCC 6803 / N-1</strain>
    </source>
</reference>
<reference key="2">
    <citation type="journal article" date="1996" name="DNA Res.">
        <title>Sequence analysis of the genome of the unicellular cyanobacterium Synechocystis sp. strain PCC6803. II. Sequence determination of the entire genome and assignment of potential protein-coding regions.</title>
        <authorList>
            <person name="Kaneko T."/>
            <person name="Sato S."/>
            <person name="Kotani H."/>
            <person name="Tanaka A."/>
            <person name="Asamizu E."/>
            <person name="Nakamura Y."/>
            <person name="Miyajima N."/>
            <person name="Hirosawa M."/>
            <person name="Sugiura M."/>
            <person name="Sasamoto S."/>
            <person name="Kimura T."/>
            <person name="Hosouchi T."/>
            <person name="Matsuno A."/>
            <person name="Muraki A."/>
            <person name="Nakazaki N."/>
            <person name="Naruo K."/>
            <person name="Okumura S."/>
            <person name="Shimpo S."/>
            <person name="Takeuchi C."/>
            <person name="Wada T."/>
            <person name="Watanabe A."/>
            <person name="Yamada M."/>
            <person name="Yasuda M."/>
            <person name="Tabata S."/>
        </authorList>
    </citation>
    <scope>NUCLEOTIDE SEQUENCE [LARGE SCALE GENOMIC DNA]</scope>
    <source>
        <strain>ATCC 27184 / PCC 6803 / Kazusa</strain>
    </source>
</reference>
<comment type="subcellular location">
    <subcellularLocation>
        <location evidence="2">Cell membrane</location>
        <topology evidence="2">Multi-pass membrane protein</topology>
    </subcellularLocation>
</comment>
<comment type="similarity">
    <text evidence="2">Belongs to the autoinducer-2 exporter (AI-2E) (TC 2.A.86) family.</text>
</comment>
<feature type="chain" id="PRO_0000148320" description="Putative transport protein sll0060">
    <location>
        <begin position="1"/>
        <end position="344"/>
    </location>
</feature>
<feature type="transmembrane region" description="Helical" evidence="1">
    <location>
        <begin position="14"/>
        <end position="34"/>
    </location>
</feature>
<feature type="transmembrane region" description="Helical" evidence="1">
    <location>
        <begin position="41"/>
        <end position="61"/>
    </location>
</feature>
<feature type="transmembrane region" description="Helical" evidence="1">
    <location>
        <begin position="72"/>
        <end position="92"/>
    </location>
</feature>
<feature type="transmembrane region" description="Helical" evidence="1">
    <location>
        <begin position="155"/>
        <end position="175"/>
    </location>
</feature>
<feature type="transmembrane region" description="Helical" evidence="1">
    <location>
        <begin position="215"/>
        <end position="235"/>
    </location>
</feature>
<feature type="transmembrane region" description="Helical" evidence="1">
    <location>
        <begin position="237"/>
        <end position="257"/>
    </location>
</feature>
<feature type="transmembrane region" description="Helical" evidence="1">
    <location>
        <begin position="262"/>
        <end position="282"/>
    </location>
</feature>
<feature type="transmembrane region" description="Helical" evidence="1">
    <location>
        <begin position="310"/>
        <end position="330"/>
    </location>
</feature>
<gene>
    <name type="ordered locus">sll0060</name>
</gene>
<dbReference type="EMBL" id="BA000022">
    <property type="protein sequence ID" value="BAA10289.1"/>
    <property type="molecule type" value="Genomic_DNA"/>
</dbReference>
<dbReference type="PIR" id="S74371">
    <property type="entry name" value="S74371"/>
</dbReference>
<dbReference type="SMR" id="Q55153"/>
<dbReference type="FunCoup" id="Q55153">
    <property type="interactions" value="350"/>
</dbReference>
<dbReference type="STRING" id="1148.gene:10499789"/>
<dbReference type="PaxDb" id="1148-1001147"/>
<dbReference type="EnsemblBacteria" id="BAA10289">
    <property type="protein sequence ID" value="BAA10289"/>
    <property type="gene ID" value="BAA10289"/>
</dbReference>
<dbReference type="KEGG" id="syn:sll0060"/>
<dbReference type="eggNOG" id="COG0628">
    <property type="taxonomic scope" value="Bacteria"/>
</dbReference>
<dbReference type="InParanoid" id="Q55153"/>
<dbReference type="PhylomeDB" id="Q55153"/>
<dbReference type="Proteomes" id="UP000001425">
    <property type="component" value="Chromosome"/>
</dbReference>
<dbReference type="GO" id="GO:0005886">
    <property type="term" value="C:plasma membrane"/>
    <property type="evidence" value="ECO:0007669"/>
    <property type="project" value="UniProtKB-SubCell"/>
</dbReference>
<dbReference type="GO" id="GO:0055085">
    <property type="term" value="P:transmembrane transport"/>
    <property type="evidence" value="ECO:0000318"/>
    <property type="project" value="GO_Central"/>
</dbReference>
<dbReference type="InterPro" id="IPR002549">
    <property type="entry name" value="AI-2E-like"/>
</dbReference>
<dbReference type="PANTHER" id="PTHR21716">
    <property type="entry name" value="TRANSMEMBRANE PROTEIN"/>
    <property type="match status" value="1"/>
</dbReference>
<dbReference type="PANTHER" id="PTHR21716:SF66">
    <property type="entry name" value="TRANSPORT PROTEIN SLL0063-RELATED"/>
    <property type="match status" value="1"/>
</dbReference>
<dbReference type="Pfam" id="PF01594">
    <property type="entry name" value="AI-2E_transport"/>
    <property type="match status" value="1"/>
</dbReference>
<evidence type="ECO:0000255" key="1"/>
<evidence type="ECO:0000305" key="2"/>
<name>Y060_SYNY3</name>
<accession>Q55153</accession>
<keyword id="KW-1003">Cell membrane</keyword>
<keyword id="KW-0472">Membrane</keyword>
<keyword id="KW-1185">Reference proteome</keyword>
<keyword id="KW-0812">Transmembrane</keyword>
<keyword id="KW-1133">Transmembrane helix</keyword>
<keyword id="KW-0813">Transport</keyword>
<protein>
    <recommendedName>
        <fullName>Putative transport protein sll0060</fullName>
    </recommendedName>
</protein>
<organism>
    <name type="scientific">Synechocystis sp. (strain ATCC 27184 / PCC 6803 / Kazusa)</name>
    <dbReference type="NCBI Taxonomy" id="1111708"/>
    <lineage>
        <taxon>Bacteria</taxon>
        <taxon>Bacillati</taxon>
        <taxon>Cyanobacteriota</taxon>
        <taxon>Cyanophyceae</taxon>
        <taxon>Synechococcales</taxon>
        <taxon>Merismopediaceae</taxon>
        <taxon>Synechocystis</taxon>
    </lineage>
</organism>
<sequence>MNWPNMPPGDRRWLWIGLTLPLCLLNGWVLLQILDYFQSPLRIFIIANLVAFILGYPVRWLQRYPRLKLPYAVALVLLTTAIILAVIGLLVIPKLVDQIRTVLQLLPHLNALGDRHLESLDNLSNQWEIPTNFRAWGRELSNEFPNQIRSITNQLINLLIWTAGSLVEAGFIFIMTVYLLLRGQTFWDGIFRWLPIDWRHKVRQRLRHSFQNYYIGQATVAALLGVSLIISLSIFQVPLALLFGMFVGFMAFFPFGGGTSIVLISIIASFQSIWLGIKVLAIATVVDQVVENGLAPKLLGRVTGVHPVWILLSLMIGAKVAGLLGILVAIPIASFIRDMLNDFI</sequence>